<dbReference type="EC" id="4.3.1.3" evidence="1"/>
<dbReference type="EMBL" id="BX897700">
    <property type="protein sequence ID" value="CAF26163.1"/>
    <property type="molecule type" value="Genomic_DNA"/>
</dbReference>
<dbReference type="RefSeq" id="WP_011179418.1">
    <property type="nucleotide sequence ID" value="NC_005955.1"/>
</dbReference>
<dbReference type="SMR" id="Q6FZP9"/>
<dbReference type="KEGG" id="bqu:BQ06730"/>
<dbReference type="eggNOG" id="COG2986">
    <property type="taxonomic scope" value="Bacteria"/>
</dbReference>
<dbReference type="HOGENOM" id="CLU_014801_4_0_5"/>
<dbReference type="OrthoDB" id="9806955at2"/>
<dbReference type="UniPathway" id="UPA00379">
    <property type="reaction ID" value="UER00549"/>
</dbReference>
<dbReference type="Proteomes" id="UP000000597">
    <property type="component" value="Chromosome"/>
</dbReference>
<dbReference type="GO" id="GO:0005737">
    <property type="term" value="C:cytoplasm"/>
    <property type="evidence" value="ECO:0007669"/>
    <property type="project" value="UniProtKB-SubCell"/>
</dbReference>
<dbReference type="GO" id="GO:0004397">
    <property type="term" value="F:histidine ammonia-lyase activity"/>
    <property type="evidence" value="ECO:0007669"/>
    <property type="project" value="UniProtKB-UniRule"/>
</dbReference>
<dbReference type="GO" id="GO:0019556">
    <property type="term" value="P:L-histidine catabolic process to glutamate and formamide"/>
    <property type="evidence" value="ECO:0007669"/>
    <property type="project" value="UniProtKB-UniPathway"/>
</dbReference>
<dbReference type="GO" id="GO:0019557">
    <property type="term" value="P:L-histidine catabolic process to glutamate and formate"/>
    <property type="evidence" value="ECO:0007669"/>
    <property type="project" value="UniProtKB-UniPathway"/>
</dbReference>
<dbReference type="CDD" id="cd00332">
    <property type="entry name" value="PAL-HAL"/>
    <property type="match status" value="1"/>
</dbReference>
<dbReference type="FunFam" id="1.10.275.10:FF:000005">
    <property type="entry name" value="Histidine ammonia-lyase"/>
    <property type="match status" value="1"/>
</dbReference>
<dbReference type="FunFam" id="1.20.200.10:FF:000003">
    <property type="entry name" value="Histidine ammonia-lyase"/>
    <property type="match status" value="1"/>
</dbReference>
<dbReference type="Gene3D" id="1.20.200.10">
    <property type="entry name" value="Fumarase/aspartase (Central domain)"/>
    <property type="match status" value="1"/>
</dbReference>
<dbReference type="Gene3D" id="1.10.275.10">
    <property type="entry name" value="Fumarase/aspartase (N-terminal domain)"/>
    <property type="match status" value="1"/>
</dbReference>
<dbReference type="HAMAP" id="MF_00229">
    <property type="entry name" value="His_ammonia_lyase"/>
    <property type="match status" value="1"/>
</dbReference>
<dbReference type="InterPro" id="IPR001106">
    <property type="entry name" value="Aromatic_Lyase"/>
</dbReference>
<dbReference type="InterPro" id="IPR024083">
    <property type="entry name" value="Fumarase/histidase_N"/>
</dbReference>
<dbReference type="InterPro" id="IPR005921">
    <property type="entry name" value="HutH"/>
</dbReference>
<dbReference type="InterPro" id="IPR008948">
    <property type="entry name" value="L-Aspartase-like"/>
</dbReference>
<dbReference type="InterPro" id="IPR022313">
    <property type="entry name" value="Phe/His_NH3-lyase_AS"/>
</dbReference>
<dbReference type="NCBIfam" id="TIGR01225">
    <property type="entry name" value="hutH"/>
    <property type="match status" value="1"/>
</dbReference>
<dbReference type="NCBIfam" id="NF006871">
    <property type="entry name" value="PRK09367.1"/>
    <property type="match status" value="1"/>
</dbReference>
<dbReference type="PANTHER" id="PTHR10362">
    <property type="entry name" value="HISTIDINE AMMONIA-LYASE"/>
    <property type="match status" value="1"/>
</dbReference>
<dbReference type="Pfam" id="PF00221">
    <property type="entry name" value="Lyase_aromatic"/>
    <property type="match status" value="1"/>
</dbReference>
<dbReference type="SUPFAM" id="SSF48557">
    <property type="entry name" value="L-aspartase-like"/>
    <property type="match status" value="1"/>
</dbReference>
<dbReference type="PROSITE" id="PS00488">
    <property type="entry name" value="PAL_HISTIDASE"/>
    <property type="match status" value="1"/>
</dbReference>
<reference key="1">
    <citation type="journal article" date="2004" name="Proc. Natl. Acad. Sci. U.S.A.">
        <title>The louse-borne human pathogen Bartonella quintana is a genomic derivative of the zoonotic agent Bartonella henselae.</title>
        <authorList>
            <person name="Alsmark U.C.M."/>
            <person name="Frank A.C."/>
            <person name="Karlberg E.O."/>
            <person name="Legault B.-A."/>
            <person name="Ardell D.H."/>
            <person name="Canbaeck B."/>
            <person name="Eriksson A.-S."/>
            <person name="Naeslund A.K."/>
            <person name="Handley S.A."/>
            <person name="Huvet M."/>
            <person name="La Scola B."/>
            <person name="Holmberg M."/>
            <person name="Andersson S.G.E."/>
        </authorList>
    </citation>
    <scope>NUCLEOTIDE SEQUENCE [LARGE SCALE GENOMIC DNA]</scope>
    <source>
        <strain>Toulouse</strain>
    </source>
</reference>
<name>HUTH_BARQU</name>
<gene>
    <name evidence="1" type="primary">hutH</name>
    <name type="ordered locus">BQ06730</name>
</gene>
<feature type="chain" id="PRO_0000160993" description="Histidine ammonia-lyase">
    <location>
        <begin position="1"/>
        <end position="512"/>
    </location>
</feature>
<feature type="modified residue" description="2,3-didehydroalanine (Ser)" evidence="1">
    <location>
        <position position="143"/>
    </location>
</feature>
<feature type="cross-link" description="5-imidazolinone (Ala-Gly)" evidence="1">
    <location>
        <begin position="142"/>
        <end position="144"/>
    </location>
</feature>
<accession>Q6FZP9</accession>
<comment type="catalytic activity">
    <reaction evidence="1">
        <text>L-histidine = trans-urocanate + NH4(+)</text>
        <dbReference type="Rhea" id="RHEA:21232"/>
        <dbReference type="ChEBI" id="CHEBI:17771"/>
        <dbReference type="ChEBI" id="CHEBI:28938"/>
        <dbReference type="ChEBI" id="CHEBI:57595"/>
        <dbReference type="EC" id="4.3.1.3"/>
    </reaction>
</comment>
<comment type="pathway">
    <text evidence="1">Amino-acid degradation; L-histidine degradation into L-glutamate; N-formimidoyl-L-glutamate from L-histidine: step 1/3.</text>
</comment>
<comment type="subcellular location">
    <subcellularLocation>
        <location evidence="1">Cytoplasm</location>
    </subcellularLocation>
</comment>
<comment type="PTM">
    <text evidence="1">Contains an active site 4-methylidene-imidazol-5-one (MIO), which is formed autocatalytically by cyclization and dehydration of residues Ala-Ser-Gly.</text>
</comment>
<comment type="similarity">
    <text evidence="1">Belongs to the PAL/histidase family.</text>
</comment>
<proteinExistence type="inferred from homology"/>
<keyword id="KW-0963">Cytoplasm</keyword>
<keyword id="KW-0369">Histidine metabolism</keyword>
<keyword id="KW-0456">Lyase</keyword>
<protein>
    <recommendedName>
        <fullName evidence="1">Histidine ammonia-lyase</fullName>
        <shortName evidence="1">Histidase</shortName>
        <ecNumber evidence="1">4.3.1.3</ecNumber>
    </recommendedName>
</protein>
<organism>
    <name type="scientific">Bartonella quintana (strain Toulouse)</name>
    <name type="common">Rochalimaea quintana</name>
    <dbReference type="NCBI Taxonomy" id="283165"/>
    <lineage>
        <taxon>Bacteria</taxon>
        <taxon>Pseudomonadati</taxon>
        <taxon>Pseudomonadota</taxon>
        <taxon>Alphaproteobacteria</taxon>
        <taxon>Hyphomicrobiales</taxon>
        <taxon>Bartonellaceae</taxon>
        <taxon>Bartonella</taxon>
    </lineage>
</organism>
<evidence type="ECO:0000255" key="1">
    <source>
        <dbReference type="HAMAP-Rule" id="MF_00229"/>
    </source>
</evidence>
<sequence>MTIVLNPGKVTLNQLEAIYWNGEVSKLHNDTHLAIRKGADRIAEIAAGSQPVYGINTGFGKLASIKIDANDVAVLQRNLILSHCCAVGAPLAENIVRLMMTLKLISLGRGASGVRLELVHLLESMLAKGVIPVIPEKGSVGASGDLAPLAHMVAVMIGEGEAFFQNIRMSGAAALEKARLFPITLEAKEGLALINGTQTSTALALAGLFQGYRALCGGLLAGALTTDAVMGSTAPFHPDIHILRGHYGQIVVSQTLEKLIKDSEIRAAHLCDDDHRVQDPYCIRCQPQVMGACFDVLVAAAKTLIIEANAVTDNPLILSNGEVVSGGNFHAEPVAFSADQIALALCEIGSISQRRIALMVDPTVSCGLPPFLAQNAGLNSGFMIAEITAAALMSENKQMAHPASVDSTPTSANQEDHVSMACHGARRLLAMNENLFTIIGIETLAAAQGIEYRAPLKTSSLLQSVMKRLRKNIDTLKVDRYLAPDLHKAHILVREGHLLSVLPEIFPRLEPQ</sequence>